<protein>
    <recommendedName>
        <fullName evidence="1">Small ribosomal subunit protein uS17</fullName>
    </recommendedName>
    <alternativeName>
        <fullName evidence="2">30S ribosomal protein S17</fullName>
    </alternativeName>
</protein>
<name>RS17_PROMP</name>
<evidence type="ECO:0000255" key="1">
    <source>
        <dbReference type="HAMAP-Rule" id="MF_01345"/>
    </source>
</evidence>
<evidence type="ECO:0000305" key="2"/>
<feature type="chain" id="PRO_0000233539" description="Small ribosomal subunit protein uS17">
    <location>
        <begin position="1"/>
        <end position="88"/>
    </location>
</feature>
<reference key="1">
    <citation type="journal article" date="2003" name="Nature">
        <title>Genome divergence in two Prochlorococcus ecotypes reflects oceanic niche differentiation.</title>
        <authorList>
            <person name="Rocap G."/>
            <person name="Larimer F.W."/>
            <person name="Lamerdin J.E."/>
            <person name="Malfatti S."/>
            <person name="Chain P."/>
            <person name="Ahlgren N.A."/>
            <person name="Arellano A."/>
            <person name="Coleman M."/>
            <person name="Hauser L."/>
            <person name="Hess W.R."/>
            <person name="Johnson Z.I."/>
            <person name="Land M.L."/>
            <person name="Lindell D."/>
            <person name="Post A.F."/>
            <person name="Regala W."/>
            <person name="Shah M."/>
            <person name="Shaw S.L."/>
            <person name="Steglich C."/>
            <person name="Sullivan M.B."/>
            <person name="Ting C.S."/>
            <person name="Tolonen A."/>
            <person name="Webb E.A."/>
            <person name="Zinser E.R."/>
            <person name="Chisholm S.W."/>
        </authorList>
    </citation>
    <scope>NUCLEOTIDE SEQUENCE [LARGE SCALE GENOMIC DNA]</scope>
    <source>
        <strain>CCMP1986 / NIES-2087 / MED4</strain>
    </source>
</reference>
<proteinExistence type="inferred from homology"/>
<keyword id="KW-0687">Ribonucleoprotein</keyword>
<keyword id="KW-0689">Ribosomal protein</keyword>
<keyword id="KW-0694">RNA-binding</keyword>
<keyword id="KW-0699">rRNA-binding</keyword>
<sequence length="88" mass="10164">MALKERIGTVVSDKMDKTVVVAVINRYPHPTYKKIVSKTTRYKAHDPENSCVLGDRVKIKETRPLSAHKRWAIEEILNKTIMSKEDKK</sequence>
<accession>Q7TU28</accession>
<gene>
    <name evidence="1" type="primary">rpsQ</name>
    <name evidence="1" type="synonym">rps17</name>
    <name type="ordered locus">PMM1549</name>
</gene>
<dbReference type="EMBL" id="BX548174">
    <property type="protein sequence ID" value="CAE20008.1"/>
    <property type="molecule type" value="Genomic_DNA"/>
</dbReference>
<dbReference type="RefSeq" id="WP_011133177.1">
    <property type="nucleotide sequence ID" value="NC_005072.1"/>
</dbReference>
<dbReference type="SMR" id="Q7TU28"/>
<dbReference type="STRING" id="59919.PMM1549"/>
<dbReference type="KEGG" id="pmm:PMM1549"/>
<dbReference type="eggNOG" id="COG0186">
    <property type="taxonomic scope" value="Bacteria"/>
</dbReference>
<dbReference type="HOGENOM" id="CLU_073626_1_2_3"/>
<dbReference type="OrthoDB" id="9811714at2"/>
<dbReference type="Proteomes" id="UP000001026">
    <property type="component" value="Chromosome"/>
</dbReference>
<dbReference type="GO" id="GO:0022627">
    <property type="term" value="C:cytosolic small ribosomal subunit"/>
    <property type="evidence" value="ECO:0007669"/>
    <property type="project" value="TreeGrafter"/>
</dbReference>
<dbReference type="GO" id="GO:0019843">
    <property type="term" value="F:rRNA binding"/>
    <property type="evidence" value="ECO:0007669"/>
    <property type="project" value="UniProtKB-UniRule"/>
</dbReference>
<dbReference type="GO" id="GO:0003735">
    <property type="term" value="F:structural constituent of ribosome"/>
    <property type="evidence" value="ECO:0007669"/>
    <property type="project" value="InterPro"/>
</dbReference>
<dbReference type="GO" id="GO:0006412">
    <property type="term" value="P:translation"/>
    <property type="evidence" value="ECO:0007669"/>
    <property type="project" value="UniProtKB-UniRule"/>
</dbReference>
<dbReference type="CDD" id="cd00364">
    <property type="entry name" value="Ribosomal_uS17"/>
    <property type="match status" value="1"/>
</dbReference>
<dbReference type="Gene3D" id="2.40.50.140">
    <property type="entry name" value="Nucleic acid-binding proteins"/>
    <property type="match status" value="1"/>
</dbReference>
<dbReference type="HAMAP" id="MF_01345_B">
    <property type="entry name" value="Ribosomal_uS17_B"/>
    <property type="match status" value="1"/>
</dbReference>
<dbReference type="InterPro" id="IPR012340">
    <property type="entry name" value="NA-bd_OB-fold"/>
</dbReference>
<dbReference type="InterPro" id="IPR000266">
    <property type="entry name" value="Ribosomal_uS17"/>
</dbReference>
<dbReference type="InterPro" id="IPR019984">
    <property type="entry name" value="Ribosomal_uS17_bact/chlr"/>
</dbReference>
<dbReference type="InterPro" id="IPR019979">
    <property type="entry name" value="Ribosomal_uS17_CS"/>
</dbReference>
<dbReference type="NCBIfam" id="NF004123">
    <property type="entry name" value="PRK05610.1"/>
    <property type="match status" value="1"/>
</dbReference>
<dbReference type="NCBIfam" id="TIGR03635">
    <property type="entry name" value="uS17_bact"/>
    <property type="match status" value="1"/>
</dbReference>
<dbReference type="PANTHER" id="PTHR10744">
    <property type="entry name" value="40S RIBOSOMAL PROTEIN S11 FAMILY MEMBER"/>
    <property type="match status" value="1"/>
</dbReference>
<dbReference type="PANTHER" id="PTHR10744:SF1">
    <property type="entry name" value="SMALL RIBOSOMAL SUBUNIT PROTEIN US17M"/>
    <property type="match status" value="1"/>
</dbReference>
<dbReference type="Pfam" id="PF00366">
    <property type="entry name" value="Ribosomal_S17"/>
    <property type="match status" value="1"/>
</dbReference>
<dbReference type="PRINTS" id="PR00973">
    <property type="entry name" value="RIBOSOMALS17"/>
</dbReference>
<dbReference type="SUPFAM" id="SSF50249">
    <property type="entry name" value="Nucleic acid-binding proteins"/>
    <property type="match status" value="1"/>
</dbReference>
<dbReference type="PROSITE" id="PS00056">
    <property type="entry name" value="RIBOSOMAL_S17"/>
    <property type="match status" value="1"/>
</dbReference>
<comment type="function">
    <text evidence="1">One of the primary rRNA binding proteins, it binds specifically to the 5'-end of 16S ribosomal RNA.</text>
</comment>
<comment type="subunit">
    <text evidence="1">Part of the 30S ribosomal subunit.</text>
</comment>
<comment type="similarity">
    <text evidence="1">Belongs to the universal ribosomal protein uS17 family.</text>
</comment>
<organism>
    <name type="scientific">Prochlorococcus marinus subsp. pastoris (strain CCMP1986 / NIES-2087 / MED4)</name>
    <dbReference type="NCBI Taxonomy" id="59919"/>
    <lineage>
        <taxon>Bacteria</taxon>
        <taxon>Bacillati</taxon>
        <taxon>Cyanobacteriota</taxon>
        <taxon>Cyanophyceae</taxon>
        <taxon>Synechococcales</taxon>
        <taxon>Prochlorococcaceae</taxon>
        <taxon>Prochlorococcus</taxon>
    </lineage>
</organism>